<evidence type="ECO:0000255" key="1">
    <source>
        <dbReference type="HAMAP-Rule" id="MF_01433"/>
    </source>
</evidence>
<reference key="1">
    <citation type="journal article" date="2009" name="PLoS Genet.">
        <title>Organised genome dynamics in the Escherichia coli species results in highly diverse adaptive paths.</title>
        <authorList>
            <person name="Touchon M."/>
            <person name="Hoede C."/>
            <person name="Tenaillon O."/>
            <person name="Barbe V."/>
            <person name="Baeriswyl S."/>
            <person name="Bidet P."/>
            <person name="Bingen E."/>
            <person name="Bonacorsi S."/>
            <person name="Bouchier C."/>
            <person name="Bouvet O."/>
            <person name="Calteau A."/>
            <person name="Chiapello H."/>
            <person name="Clermont O."/>
            <person name="Cruveiller S."/>
            <person name="Danchin A."/>
            <person name="Diard M."/>
            <person name="Dossat C."/>
            <person name="Karoui M.E."/>
            <person name="Frapy E."/>
            <person name="Garry L."/>
            <person name="Ghigo J.M."/>
            <person name="Gilles A.M."/>
            <person name="Johnson J."/>
            <person name="Le Bouguenec C."/>
            <person name="Lescat M."/>
            <person name="Mangenot S."/>
            <person name="Martinez-Jehanne V."/>
            <person name="Matic I."/>
            <person name="Nassif X."/>
            <person name="Oztas S."/>
            <person name="Petit M.A."/>
            <person name="Pichon C."/>
            <person name="Rouy Z."/>
            <person name="Ruf C.S."/>
            <person name="Schneider D."/>
            <person name="Tourret J."/>
            <person name="Vacherie B."/>
            <person name="Vallenet D."/>
            <person name="Medigue C."/>
            <person name="Rocha E.P.C."/>
            <person name="Denamur E."/>
        </authorList>
    </citation>
    <scope>NUCLEOTIDE SEQUENCE [LARGE SCALE GENOMIC DNA]</scope>
    <source>
        <strain>55989 / EAEC</strain>
    </source>
</reference>
<keyword id="KW-0106">Calcium</keyword>
<keyword id="KW-0326">Glycosidase</keyword>
<keyword id="KW-0378">Hydrolase</keyword>
<keyword id="KW-0479">Metal-binding</keyword>
<keyword id="KW-1185">Reference proteome</keyword>
<comment type="function">
    <text evidence="1">Hydrolyzes cytidine or uridine to ribose and cytosine or uracil, respectively. Has a clear preference for cytidine over uridine. Strictly specific for ribonucleosides.</text>
</comment>
<comment type="catalytic activity">
    <reaction evidence="1">
        <text>a pyrimidine ribonucleoside + H2O = a pyrimidine nucleobase + D-ribose</text>
        <dbReference type="Rhea" id="RHEA:56816"/>
        <dbReference type="ChEBI" id="CHEBI:15377"/>
        <dbReference type="ChEBI" id="CHEBI:26432"/>
        <dbReference type="ChEBI" id="CHEBI:47013"/>
        <dbReference type="ChEBI" id="CHEBI:141014"/>
        <dbReference type="EC" id="3.2.2.8"/>
    </reaction>
</comment>
<comment type="cofactor">
    <cofactor evidence="1">
        <name>Ca(2+)</name>
        <dbReference type="ChEBI" id="CHEBI:29108"/>
    </cofactor>
    <text evidence="1">Binds 1 Ca(2+) ion per monomer.</text>
</comment>
<comment type="subunit">
    <text evidence="1">Homotetramer.</text>
</comment>
<comment type="similarity">
    <text evidence="1">Belongs to the IUNH family. RihB subfamily.</text>
</comment>
<sequence length="313" mass="33766">MEKRKIILDCDPGHDDAIAMMMAAKHPAIDLLGITIVAGNQTLDKTLINGLNVCQKLEINVPVYAGMPQPIMRQQIVADNIHGETGLDGPVFEPLTRQAESTHAVKYIIDTLMASDGDITLVPVGPLSNIAVAMRMQPAILPKIREIVLMGGAYGTGNFTPSAEFNIFADPEAARVVFTSGVPLVMMGLDLTNQTVCTPDVIARMERAGGPAGELFSDIMNFTLKTQFENYGLAGGPVHDATCIGYLINPDGIKTQEMYVEVDVNSGPCYGRTVCDELGVLGKPANTKVGITIDTDWFWGLVEECVRGYIKTH</sequence>
<accession>B7LAI5</accession>
<name>RIHB_ECO55</name>
<protein>
    <recommendedName>
        <fullName evidence="1">Pyrimidine-specific ribonucleoside hydrolase RihB</fullName>
        <ecNumber evidence="1">3.2.2.8</ecNumber>
    </recommendedName>
    <alternativeName>
        <fullName evidence="1">Cytidine/uridine-specific hydrolase</fullName>
    </alternativeName>
</protein>
<organism>
    <name type="scientific">Escherichia coli (strain 55989 / EAEC)</name>
    <dbReference type="NCBI Taxonomy" id="585055"/>
    <lineage>
        <taxon>Bacteria</taxon>
        <taxon>Pseudomonadati</taxon>
        <taxon>Pseudomonadota</taxon>
        <taxon>Gammaproteobacteria</taxon>
        <taxon>Enterobacterales</taxon>
        <taxon>Enterobacteriaceae</taxon>
        <taxon>Escherichia</taxon>
    </lineage>
</organism>
<proteinExistence type="inferred from homology"/>
<feature type="chain" id="PRO_1000184901" description="Pyrimidine-specific ribonucleoside hydrolase RihB">
    <location>
        <begin position="1"/>
        <end position="313"/>
    </location>
</feature>
<feature type="active site" description="Proton acceptor" evidence="1">
    <location>
        <position position="11"/>
    </location>
</feature>
<feature type="binding site" evidence="1">
    <location>
        <position position="11"/>
    </location>
    <ligand>
        <name>Ca(2+)</name>
        <dbReference type="ChEBI" id="CHEBI:29108"/>
    </ligand>
</feature>
<feature type="binding site" evidence="1">
    <location>
        <position position="16"/>
    </location>
    <ligand>
        <name>Ca(2+)</name>
        <dbReference type="ChEBI" id="CHEBI:29108"/>
    </ligand>
</feature>
<feature type="binding site" evidence="1">
    <location>
        <position position="124"/>
    </location>
    <ligand>
        <name>Ca(2+)</name>
        <dbReference type="ChEBI" id="CHEBI:29108"/>
    </ligand>
</feature>
<feature type="binding site" evidence="1">
    <location>
        <position position="227"/>
    </location>
    <ligand>
        <name>substrate</name>
    </ligand>
</feature>
<feature type="binding site" evidence="1">
    <location>
        <position position="239"/>
    </location>
    <ligand>
        <name>substrate</name>
    </ligand>
</feature>
<feature type="binding site" evidence="1">
    <location>
        <position position="240"/>
    </location>
    <ligand>
        <name>Ca(2+)</name>
        <dbReference type="ChEBI" id="CHEBI:29108"/>
    </ligand>
</feature>
<gene>
    <name evidence="1" type="primary">rihB</name>
    <name type="ordered locus">EC55989_2415</name>
</gene>
<dbReference type="EC" id="3.2.2.8" evidence="1"/>
<dbReference type="EMBL" id="CU928145">
    <property type="protein sequence ID" value="CAU98285.1"/>
    <property type="molecule type" value="Genomic_DNA"/>
</dbReference>
<dbReference type="RefSeq" id="WP_000415455.1">
    <property type="nucleotide sequence ID" value="NC_011748.1"/>
</dbReference>
<dbReference type="SMR" id="B7LAI5"/>
<dbReference type="GeneID" id="75206415"/>
<dbReference type="KEGG" id="eck:EC55989_2415"/>
<dbReference type="HOGENOM" id="CLU_036838_2_0_6"/>
<dbReference type="Proteomes" id="UP000000746">
    <property type="component" value="Chromosome"/>
</dbReference>
<dbReference type="GO" id="GO:0005829">
    <property type="term" value="C:cytosol"/>
    <property type="evidence" value="ECO:0007669"/>
    <property type="project" value="TreeGrafter"/>
</dbReference>
<dbReference type="GO" id="GO:0005509">
    <property type="term" value="F:calcium ion binding"/>
    <property type="evidence" value="ECO:0007669"/>
    <property type="project" value="UniProtKB-UniRule"/>
</dbReference>
<dbReference type="GO" id="GO:0008477">
    <property type="term" value="F:purine nucleosidase activity"/>
    <property type="evidence" value="ECO:0007669"/>
    <property type="project" value="TreeGrafter"/>
</dbReference>
<dbReference type="GO" id="GO:0045437">
    <property type="term" value="F:uridine nucleosidase activity"/>
    <property type="evidence" value="ECO:0007669"/>
    <property type="project" value="UniProtKB-ARBA"/>
</dbReference>
<dbReference type="GO" id="GO:0006152">
    <property type="term" value="P:purine nucleoside catabolic process"/>
    <property type="evidence" value="ECO:0007669"/>
    <property type="project" value="TreeGrafter"/>
</dbReference>
<dbReference type="GO" id="GO:0006206">
    <property type="term" value="P:pyrimidine nucleobase metabolic process"/>
    <property type="evidence" value="ECO:0007669"/>
    <property type="project" value="UniProtKB-UniRule"/>
</dbReference>
<dbReference type="GO" id="GO:0046133">
    <property type="term" value="P:pyrimidine ribonucleoside catabolic process"/>
    <property type="evidence" value="ECO:0007669"/>
    <property type="project" value="InterPro"/>
</dbReference>
<dbReference type="CDD" id="cd02651">
    <property type="entry name" value="nuc_hydro_IU_UC_XIUA"/>
    <property type="match status" value="1"/>
</dbReference>
<dbReference type="FunFam" id="3.90.245.10:FF:000003">
    <property type="entry name" value="Pyrimidine-specific ribonucleoside hydrolase RihB"/>
    <property type="match status" value="1"/>
</dbReference>
<dbReference type="Gene3D" id="3.90.245.10">
    <property type="entry name" value="Ribonucleoside hydrolase-like"/>
    <property type="match status" value="1"/>
</dbReference>
<dbReference type="HAMAP" id="MF_01433">
    <property type="entry name" value="Pyrim_hydro_RihB"/>
    <property type="match status" value="1"/>
</dbReference>
<dbReference type="InterPro" id="IPR015910">
    <property type="entry name" value="I/U_nuclsd_hydro_CS"/>
</dbReference>
<dbReference type="InterPro" id="IPR001910">
    <property type="entry name" value="Inosine/uridine_hydrolase_dom"/>
</dbReference>
<dbReference type="InterPro" id="IPR023186">
    <property type="entry name" value="IUNH"/>
</dbReference>
<dbReference type="InterPro" id="IPR022977">
    <property type="entry name" value="Pyrim_hydro_RihB"/>
</dbReference>
<dbReference type="InterPro" id="IPR036452">
    <property type="entry name" value="Ribo_hydro-like"/>
</dbReference>
<dbReference type="NCBIfam" id="NF007417">
    <property type="entry name" value="PRK09955.1"/>
    <property type="match status" value="1"/>
</dbReference>
<dbReference type="PANTHER" id="PTHR12304">
    <property type="entry name" value="INOSINE-URIDINE PREFERRING NUCLEOSIDE HYDROLASE"/>
    <property type="match status" value="1"/>
</dbReference>
<dbReference type="PANTHER" id="PTHR12304:SF4">
    <property type="entry name" value="URIDINE NUCLEOSIDASE"/>
    <property type="match status" value="1"/>
</dbReference>
<dbReference type="Pfam" id="PF01156">
    <property type="entry name" value="IU_nuc_hydro"/>
    <property type="match status" value="1"/>
</dbReference>
<dbReference type="SUPFAM" id="SSF53590">
    <property type="entry name" value="Nucleoside hydrolase"/>
    <property type="match status" value="1"/>
</dbReference>
<dbReference type="PROSITE" id="PS01247">
    <property type="entry name" value="IUNH"/>
    <property type="match status" value="1"/>
</dbReference>